<name>SPD1_ARATH</name>
<protein>
    <recommendedName>
        <fullName evidence="4">Protein SEEDLING PLASTID DEVELOPMENT 1</fullName>
    </recommendedName>
</protein>
<organism>
    <name type="scientific">Arabidopsis thaliana</name>
    <name type="common">Mouse-ear cress</name>
    <dbReference type="NCBI Taxonomy" id="3702"/>
    <lineage>
        <taxon>Eukaryota</taxon>
        <taxon>Viridiplantae</taxon>
        <taxon>Streptophyta</taxon>
        <taxon>Embryophyta</taxon>
        <taxon>Tracheophyta</taxon>
        <taxon>Spermatophyta</taxon>
        <taxon>Magnoliopsida</taxon>
        <taxon>eudicotyledons</taxon>
        <taxon>Gunneridae</taxon>
        <taxon>Pentapetalae</taxon>
        <taxon>rosids</taxon>
        <taxon>malvids</taxon>
        <taxon>Brassicales</taxon>
        <taxon>Brassicaceae</taxon>
        <taxon>Camelineae</taxon>
        <taxon>Arabidopsis</taxon>
    </lineage>
</organism>
<dbReference type="EMBL" id="AC011560">
    <property type="protein sequence ID" value="AAG51387.1"/>
    <property type="molecule type" value="Genomic_DNA"/>
</dbReference>
<dbReference type="EMBL" id="CP002686">
    <property type="protein sequence ID" value="AEE74903.1"/>
    <property type="molecule type" value="Genomic_DNA"/>
</dbReference>
<dbReference type="EMBL" id="CP002686">
    <property type="protein sequence ID" value="AEE74904.1"/>
    <property type="molecule type" value="Genomic_DNA"/>
</dbReference>
<dbReference type="EMBL" id="AK226197">
    <property type="protein sequence ID" value="BAE98362.1"/>
    <property type="status" value="ALT_FRAME"/>
    <property type="molecule type" value="mRNA"/>
</dbReference>
<dbReference type="EMBL" id="AY056103">
    <property type="protein sequence ID" value="AAL06991.1"/>
    <property type="status" value="ALT_INIT"/>
    <property type="molecule type" value="mRNA"/>
</dbReference>
<dbReference type="EMBL" id="BT004529">
    <property type="protein sequence ID" value="AAO42775.1"/>
    <property type="molecule type" value="mRNA"/>
</dbReference>
<dbReference type="RefSeq" id="NP_566373.2">
    <molecule id="F4J3R7-1"/>
    <property type="nucleotide sequence ID" value="NM_111877.3"/>
</dbReference>
<dbReference type="RefSeq" id="NP_850553.1">
    <molecule id="F4J3R7-2"/>
    <property type="nucleotide sequence ID" value="NM_180222.1"/>
</dbReference>
<dbReference type="FunCoup" id="F4J3R7">
    <property type="interactions" value="33"/>
</dbReference>
<dbReference type="IntAct" id="F4J3R7">
    <property type="interactions" value="1"/>
</dbReference>
<dbReference type="STRING" id="3702.F4J3R7"/>
<dbReference type="iPTMnet" id="F4J3R7"/>
<dbReference type="PaxDb" id="3702-AT3G10420.2"/>
<dbReference type="ProteomicsDB" id="197235">
    <molecule id="F4J3R7-1"/>
</dbReference>
<dbReference type="EnsemblPlants" id="AT3G10420.1">
    <molecule id="F4J3R7-2"/>
    <property type="protein sequence ID" value="AT3G10420.1"/>
    <property type="gene ID" value="AT3G10420"/>
</dbReference>
<dbReference type="EnsemblPlants" id="AT3G10420.2">
    <molecule id="F4J3R7-1"/>
    <property type="protein sequence ID" value="AT3G10420.2"/>
    <property type="gene ID" value="AT3G10420"/>
</dbReference>
<dbReference type="GeneID" id="820206"/>
<dbReference type="Gramene" id="AT3G10420.1">
    <molecule id="F4J3R7-2"/>
    <property type="protein sequence ID" value="AT3G10420.1"/>
    <property type="gene ID" value="AT3G10420"/>
</dbReference>
<dbReference type="Gramene" id="AT3G10420.2">
    <molecule id="F4J3R7-1"/>
    <property type="protein sequence ID" value="AT3G10420.2"/>
    <property type="gene ID" value="AT3G10420"/>
</dbReference>
<dbReference type="KEGG" id="ath:AT3G10420"/>
<dbReference type="Araport" id="AT3G10420"/>
<dbReference type="TAIR" id="AT3G10420">
    <property type="gene designation" value="SPD1"/>
</dbReference>
<dbReference type="eggNOG" id="ENOG502QQ4X">
    <property type="taxonomic scope" value="Eukaryota"/>
</dbReference>
<dbReference type="HOGENOM" id="CLU_022515_2_0_1"/>
<dbReference type="InParanoid" id="F4J3R7"/>
<dbReference type="OMA" id="FEVRQWD"/>
<dbReference type="PRO" id="PR:F4J3R7"/>
<dbReference type="Proteomes" id="UP000006548">
    <property type="component" value="Chromosome 3"/>
</dbReference>
<dbReference type="ExpressionAtlas" id="F4J3R7">
    <property type="expression patterns" value="baseline and differential"/>
</dbReference>
<dbReference type="GO" id="GO:0009507">
    <property type="term" value="C:chloroplast"/>
    <property type="evidence" value="ECO:0000314"/>
    <property type="project" value="UniProtKB"/>
</dbReference>
<dbReference type="GO" id="GO:0009941">
    <property type="term" value="C:chloroplast envelope"/>
    <property type="evidence" value="ECO:0000314"/>
    <property type="project" value="UniProtKB"/>
</dbReference>
<dbReference type="GO" id="GO:0031972">
    <property type="term" value="C:chloroplast intermembrane space"/>
    <property type="evidence" value="ECO:0000314"/>
    <property type="project" value="UniProtKB"/>
</dbReference>
<dbReference type="GO" id="GO:0031969">
    <property type="term" value="C:chloroplast membrane"/>
    <property type="evidence" value="ECO:0007669"/>
    <property type="project" value="UniProtKB-SubCell"/>
</dbReference>
<dbReference type="GO" id="GO:0005524">
    <property type="term" value="F:ATP binding"/>
    <property type="evidence" value="ECO:0007669"/>
    <property type="project" value="UniProtKB-KW"/>
</dbReference>
<dbReference type="GO" id="GO:0016887">
    <property type="term" value="F:ATP hydrolysis activity"/>
    <property type="evidence" value="ECO:0007669"/>
    <property type="project" value="InterPro"/>
</dbReference>
<dbReference type="GO" id="GO:0009657">
    <property type="term" value="P:plastid organization"/>
    <property type="evidence" value="ECO:0000315"/>
    <property type="project" value="UniProtKB"/>
</dbReference>
<dbReference type="GO" id="GO:0090677">
    <property type="term" value="P:reversible differentiation"/>
    <property type="evidence" value="ECO:0000315"/>
    <property type="project" value="UniProtKB"/>
</dbReference>
<dbReference type="GO" id="GO:0010431">
    <property type="term" value="P:seed maturation"/>
    <property type="evidence" value="ECO:0000315"/>
    <property type="project" value="UniProtKB"/>
</dbReference>
<dbReference type="CDD" id="cd00009">
    <property type="entry name" value="AAA"/>
    <property type="match status" value="1"/>
</dbReference>
<dbReference type="CDD" id="cd02645">
    <property type="entry name" value="R3H_AAA"/>
    <property type="match status" value="1"/>
</dbReference>
<dbReference type="FunFam" id="3.40.50.300:FF:001088">
    <property type="entry name" value="uncharacterized protein ycf45 isoform X2"/>
    <property type="match status" value="1"/>
</dbReference>
<dbReference type="Gene3D" id="3.40.50.300">
    <property type="entry name" value="P-loop containing nucleotide triphosphate hydrolases"/>
    <property type="match status" value="1"/>
</dbReference>
<dbReference type="InterPro" id="IPR003593">
    <property type="entry name" value="AAA+_ATPase"/>
</dbReference>
<dbReference type="InterPro" id="IPR027417">
    <property type="entry name" value="P-loop_NTPase"/>
</dbReference>
<dbReference type="InterPro" id="IPR034081">
    <property type="entry name" value="R3H_AAA"/>
</dbReference>
<dbReference type="InterPro" id="IPR045735">
    <property type="entry name" value="Spore_III_AA_AAA+_ATPase"/>
</dbReference>
<dbReference type="PANTHER" id="PTHR20953">
    <property type="entry name" value="KINASE-RELATED"/>
    <property type="match status" value="1"/>
</dbReference>
<dbReference type="PANTHER" id="PTHR20953:SF14">
    <property type="entry name" value="PROTEIN SEEDLING PLASTID DEVELOPMENT 1"/>
    <property type="match status" value="1"/>
</dbReference>
<dbReference type="Pfam" id="PF19568">
    <property type="entry name" value="Spore_III_AA"/>
    <property type="match status" value="1"/>
</dbReference>
<dbReference type="SMART" id="SM00382">
    <property type="entry name" value="AAA"/>
    <property type="match status" value="1"/>
</dbReference>
<dbReference type="SUPFAM" id="SSF52540">
    <property type="entry name" value="P-loop containing nucleoside triphosphate hydrolases"/>
    <property type="match status" value="1"/>
</dbReference>
<reference key="1">
    <citation type="journal article" date="2000" name="Nature">
        <title>Sequence and analysis of chromosome 3 of the plant Arabidopsis thaliana.</title>
        <authorList>
            <person name="Salanoubat M."/>
            <person name="Lemcke K."/>
            <person name="Rieger M."/>
            <person name="Ansorge W."/>
            <person name="Unseld M."/>
            <person name="Fartmann B."/>
            <person name="Valle G."/>
            <person name="Bloecker H."/>
            <person name="Perez-Alonso M."/>
            <person name="Obermaier B."/>
            <person name="Delseny M."/>
            <person name="Boutry M."/>
            <person name="Grivell L.A."/>
            <person name="Mache R."/>
            <person name="Puigdomenech P."/>
            <person name="De Simone V."/>
            <person name="Choisne N."/>
            <person name="Artiguenave F."/>
            <person name="Robert C."/>
            <person name="Brottier P."/>
            <person name="Wincker P."/>
            <person name="Cattolico L."/>
            <person name="Weissenbach J."/>
            <person name="Saurin W."/>
            <person name="Quetier F."/>
            <person name="Schaefer M."/>
            <person name="Mueller-Auer S."/>
            <person name="Gabel C."/>
            <person name="Fuchs M."/>
            <person name="Benes V."/>
            <person name="Wurmbach E."/>
            <person name="Drzonek H."/>
            <person name="Erfle H."/>
            <person name="Jordan N."/>
            <person name="Bangert S."/>
            <person name="Wiedelmann R."/>
            <person name="Kranz H."/>
            <person name="Voss H."/>
            <person name="Holland R."/>
            <person name="Brandt P."/>
            <person name="Nyakatura G."/>
            <person name="Vezzi A."/>
            <person name="D'Angelo M."/>
            <person name="Pallavicini A."/>
            <person name="Toppo S."/>
            <person name="Simionati B."/>
            <person name="Conrad A."/>
            <person name="Hornischer K."/>
            <person name="Kauer G."/>
            <person name="Loehnert T.-H."/>
            <person name="Nordsiek G."/>
            <person name="Reichelt J."/>
            <person name="Scharfe M."/>
            <person name="Schoen O."/>
            <person name="Bargues M."/>
            <person name="Terol J."/>
            <person name="Climent J."/>
            <person name="Navarro P."/>
            <person name="Collado C."/>
            <person name="Perez-Perez A."/>
            <person name="Ottenwaelder B."/>
            <person name="Duchemin D."/>
            <person name="Cooke R."/>
            <person name="Laudie M."/>
            <person name="Berger-Llauro C."/>
            <person name="Purnelle B."/>
            <person name="Masuy D."/>
            <person name="de Haan M."/>
            <person name="Maarse A.C."/>
            <person name="Alcaraz J.-P."/>
            <person name="Cottet A."/>
            <person name="Casacuberta E."/>
            <person name="Monfort A."/>
            <person name="Argiriou A."/>
            <person name="Flores M."/>
            <person name="Liguori R."/>
            <person name="Vitale D."/>
            <person name="Mannhaupt G."/>
            <person name="Haase D."/>
            <person name="Schoof H."/>
            <person name="Rudd S."/>
            <person name="Zaccaria P."/>
            <person name="Mewes H.-W."/>
            <person name="Mayer K.F.X."/>
            <person name="Kaul S."/>
            <person name="Town C.D."/>
            <person name="Koo H.L."/>
            <person name="Tallon L.J."/>
            <person name="Jenkins J."/>
            <person name="Rooney T."/>
            <person name="Rizzo M."/>
            <person name="Walts A."/>
            <person name="Utterback T."/>
            <person name="Fujii C.Y."/>
            <person name="Shea T.P."/>
            <person name="Creasy T.H."/>
            <person name="Haas B."/>
            <person name="Maiti R."/>
            <person name="Wu D."/>
            <person name="Peterson J."/>
            <person name="Van Aken S."/>
            <person name="Pai G."/>
            <person name="Militscher J."/>
            <person name="Sellers P."/>
            <person name="Gill J.E."/>
            <person name="Feldblyum T.V."/>
            <person name="Preuss D."/>
            <person name="Lin X."/>
            <person name="Nierman W.C."/>
            <person name="Salzberg S.L."/>
            <person name="White O."/>
            <person name="Venter J.C."/>
            <person name="Fraser C.M."/>
            <person name="Kaneko T."/>
            <person name="Nakamura Y."/>
            <person name="Sato S."/>
            <person name="Kato T."/>
            <person name="Asamizu E."/>
            <person name="Sasamoto S."/>
            <person name="Kimura T."/>
            <person name="Idesawa K."/>
            <person name="Kawashima K."/>
            <person name="Kishida Y."/>
            <person name="Kiyokawa C."/>
            <person name="Kohara M."/>
            <person name="Matsumoto M."/>
            <person name="Matsuno A."/>
            <person name="Muraki A."/>
            <person name="Nakayama S."/>
            <person name="Nakazaki N."/>
            <person name="Shinpo S."/>
            <person name="Takeuchi C."/>
            <person name="Wada T."/>
            <person name="Watanabe A."/>
            <person name="Yamada M."/>
            <person name="Yasuda M."/>
            <person name="Tabata S."/>
        </authorList>
    </citation>
    <scope>NUCLEOTIDE SEQUENCE [LARGE SCALE GENOMIC DNA]</scope>
    <source>
        <strain>cv. Columbia</strain>
    </source>
</reference>
<reference key="2">
    <citation type="journal article" date="2017" name="Plant J.">
        <title>Araport11: a complete reannotation of the Arabidopsis thaliana reference genome.</title>
        <authorList>
            <person name="Cheng C.Y."/>
            <person name="Krishnakumar V."/>
            <person name="Chan A.P."/>
            <person name="Thibaud-Nissen F."/>
            <person name="Schobel S."/>
            <person name="Town C.D."/>
        </authorList>
    </citation>
    <scope>GENOME REANNOTATION</scope>
    <source>
        <strain>cv. Columbia</strain>
    </source>
</reference>
<reference key="3">
    <citation type="submission" date="2006-07" db="EMBL/GenBank/DDBJ databases">
        <title>Large-scale analysis of RIKEN Arabidopsis full-length (RAFL) cDNAs.</title>
        <authorList>
            <person name="Totoki Y."/>
            <person name="Seki M."/>
            <person name="Ishida J."/>
            <person name="Nakajima M."/>
            <person name="Enju A."/>
            <person name="Kamiya A."/>
            <person name="Narusaka M."/>
            <person name="Shin-i T."/>
            <person name="Nakagawa M."/>
            <person name="Sakamoto N."/>
            <person name="Oishi K."/>
            <person name="Kohara Y."/>
            <person name="Kobayashi M."/>
            <person name="Toyoda A."/>
            <person name="Sakaki Y."/>
            <person name="Sakurai T."/>
            <person name="Iida K."/>
            <person name="Akiyama K."/>
            <person name="Satou M."/>
            <person name="Toyoda T."/>
            <person name="Konagaya A."/>
            <person name="Carninci P."/>
            <person name="Kawai J."/>
            <person name="Hayashizaki Y."/>
            <person name="Shinozaki K."/>
        </authorList>
    </citation>
    <scope>NUCLEOTIDE SEQUENCE [LARGE SCALE MRNA] (ISOFORM 1)</scope>
    <source>
        <strain>cv. Columbia</strain>
    </source>
</reference>
<reference key="4">
    <citation type="journal article" date="2003" name="Science">
        <title>Empirical analysis of transcriptional activity in the Arabidopsis genome.</title>
        <authorList>
            <person name="Yamada K."/>
            <person name="Lim J."/>
            <person name="Dale J.M."/>
            <person name="Chen H."/>
            <person name="Shinn P."/>
            <person name="Palm C.J."/>
            <person name="Southwick A.M."/>
            <person name="Wu H.C."/>
            <person name="Kim C.J."/>
            <person name="Nguyen M."/>
            <person name="Pham P.K."/>
            <person name="Cheuk R.F."/>
            <person name="Karlin-Newmann G."/>
            <person name="Liu S.X."/>
            <person name="Lam B."/>
            <person name="Sakano H."/>
            <person name="Wu T."/>
            <person name="Yu G."/>
            <person name="Miranda M."/>
            <person name="Quach H.L."/>
            <person name="Tripp M."/>
            <person name="Chang C.H."/>
            <person name="Lee J.M."/>
            <person name="Toriumi M.J."/>
            <person name="Chan M.M."/>
            <person name="Tang C.C."/>
            <person name="Onodera C.S."/>
            <person name="Deng J.M."/>
            <person name="Akiyama K."/>
            <person name="Ansari Y."/>
            <person name="Arakawa T."/>
            <person name="Banh J."/>
            <person name="Banno F."/>
            <person name="Bowser L."/>
            <person name="Brooks S.Y."/>
            <person name="Carninci P."/>
            <person name="Chao Q."/>
            <person name="Choy N."/>
            <person name="Enju A."/>
            <person name="Goldsmith A.D."/>
            <person name="Gurjal M."/>
            <person name="Hansen N.F."/>
            <person name="Hayashizaki Y."/>
            <person name="Johnson-Hopson C."/>
            <person name="Hsuan V.W."/>
            <person name="Iida K."/>
            <person name="Karnes M."/>
            <person name="Khan S."/>
            <person name="Koesema E."/>
            <person name="Ishida J."/>
            <person name="Jiang P.X."/>
            <person name="Jones T."/>
            <person name="Kawai J."/>
            <person name="Kamiya A."/>
            <person name="Meyers C."/>
            <person name="Nakajima M."/>
            <person name="Narusaka M."/>
            <person name="Seki M."/>
            <person name="Sakurai T."/>
            <person name="Satou M."/>
            <person name="Tamse R."/>
            <person name="Vaysberg M."/>
            <person name="Wallender E.K."/>
            <person name="Wong C."/>
            <person name="Yamamura Y."/>
            <person name="Yuan S."/>
            <person name="Shinozaki K."/>
            <person name="Davis R.W."/>
            <person name="Theologis A."/>
            <person name="Ecker J.R."/>
        </authorList>
    </citation>
    <scope>NUCLEOTIDE SEQUENCE [LARGE SCALE MRNA] OF 9-684 (ISOFORM 1)</scope>
    <source>
        <strain>cv. Columbia</strain>
    </source>
</reference>
<reference key="5">
    <citation type="journal article" date="2011" name="Plant Physiol.">
        <title>A mutation in Arabidopsis seedling plastid development1 affects plastid differentiation in embryo-derived tissues during seedling growth.</title>
        <authorList>
            <person name="Ruppel N.J."/>
            <person name="Logsdon C.A."/>
            <person name="Whippo C.W."/>
            <person name="Inoue K."/>
            <person name="Hangarter R.P."/>
        </authorList>
    </citation>
    <scope>FUNCTION</scope>
    <scope>DISRUPTION PHENOTYPE</scope>
    <scope>SUBCELLULAR LOCATION</scope>
    <source>
        <strain>cv. Columbia</strain>
    </source>
</reference>
<sequence>MRALNSRLVLIDINSSWQASRRLISATATAFSSDSSSSFRRTRGARQRIASSKSPASSPSPVRRPSDGFSFDVRSPSSDSSISSRKSPTTAPPTVELDAFLEILPPATRKELVKHEAIEELIEVVMDLGRKPLARFPSGDWVISEQPVTHQDLELAVSKVGDFSDDNRSGIDRSLHRISAIRNRKLQVIGLTCRVGRVVSGSAEIIRDLIEGGGSILVIGSPGVGKTTLIREIARMLADEHRKRVVIVDTSNEIGGDGDVPHSGIGRARRMQVPNVNLQHDVMIEAVENHMPETIIIDEIGTELEALAASTIAQRGVQLVATAHGMTIDNIIKNPSLQILIGGIESVTLGDEEARKRKVQKTILERKGPPTFTCAVEMISRTECRVHQRLDVTVDAILAGKSAPFEIRQIRGEDDVPHKLVTPIPLENLEEEPAPLLNRDFVSELLSDDEDEDFLLIRSNKARSNTYTSPRSSPVHVYTYNVLEADLLQVAEVMGLDDEIEVTDDVGEADVILASSSELKQNSSIRRVAKLHKLPIFVIKSTTMAQMVKAVRMILGRESFGSAPKAIEKSSVDDIEIKDDAPESKPSLEELDALEEVRLAIEYIVIPGGEPVELLPRRSDIIVRQLELVESYQLAVENLGTHLNPRLQILPRRSTKKTLTSSSPQKSADGSMGTTGTRLPFLKD</sequence>
<evidence type="ECO:0000255" key="1"/>
<evidence type="ECO:0000256" key="2">
    <source>
        <dbReference type="SAM" id="MobiDB-lite"/>
    </source>
</evidence>
<evidence type="ECO:0000269" key="3">
    <source>
    </source>
</evidence>
<evidence type="ECO:0000303" key="4">
    <source>
    </source>
</evidence>
<evidence type="ECO:0000305" key="5"/>
<evidence type="ECO:0000312" key="6">
    <source>
        <dbReference type="Araport" id="AT3G10420"/>
    </source>
</evidence>
<evidence type="ECO:0000312" key="7">
    <source>
        <dbReference type="EMBL" id="AAG51387.1"/>
    </source>
</evidence>
<evidence type="ECO:0000312" key="8">
    <source>
        <dbReference type="EMBL" id="AEE74904.1"/>
    </source>
</evidence>
<proteinExistence type="evidence at transcript level"/>
<keyword id="KW-0025">Alternative splicing</keyword>
<keyword id="KW-0067">ATP-binding</keyword>
<keyword id="KW-0150">Chloroplast</keyword>
<keyword id="KW-0217">Developmental protein</keyword>
<keyword id="KW-0472">Membrane</keyword>
<keyword id="KW-0547">Nucleotide-binding</keyword>
<keyword id="KW-0934">Plastid</keyword>
<keyword id="KW-1185">Reference proteome</keyword>
<keyword id="KW-0809">Transit peptide</keyword>
<gene>
    <name evidence="4" type="primary">SPD1</name>
    <name evidence="6" type="ordered locus">At3g10420</name>
    <name evidence="7" type="ORF">F13M14.30</name>
</gene>
<accession>F4J3R7</accession>
<accession>Q0WWY6</accession>
<accession>Q940C8</accession>
<accession>Q9CAE6</accession>
<feature type="transit peptide" description="Chloroplast" evidence="1">
    <location>
        <begin position="1"/>
        <end position="78"/>
    </location>
</feature>
<feature type="chain" id="PRO_0000448862" description="Protein SEEDLING PLASTID DEVELOPMENT 1" evidence="1">
    <location>
        <begin position="79"/>
        <end position="684"/>
    </location>
</feature>
<feature type="region of interest" description="Disordered" evidence="2">
    <location>
        <begin position="33"/>
        <end position="91"/>
    </location>
</feature>
<feature type="region of interest" description="Disordered" evidence="2">
    <location>
        <begin position="651"/>
        <end position="684"/>
    </location>
</feature>
<feature type="compositionally biased region" description="Low complexity" evidence="2">
    <location>
        <begin position="50"/>
        <end position="88"/>
    </location>
</feature>
<feature type="compositionally biased region" description="Low complexity" evidence="2">
    <location>
        <begin position="657"/>
        <end position="667"/>
    </location>
</feature>
<feature type="binding site" evidence="1">
    <location>
        <begin position="220"/>
        <end position="227"/>
    </location>
    <ligand>
        <name>ATP</name>
        <dbReference type="ChEBI" id="CHEBI:30616"/>
    </ligand>
</feature>
<feature type="splice variant" id="VSP_060460" description="In isoform 2.">
    <original>STTMAQM</original>
    <variation>VSFFLHG</variation>
    <location>
        <begin position="541"/>
        <end position="547"/>
    </location>
</feature>
<feature type="splice variant" id="VSP_060461" description="In isoform 2.">
    <location>
        <begin position="548"/>
        <end position="684"/>
    </location>
</feature>
<comment type="function">
    <text evidence="3">Required during eoplast (a highly reduced plastid type present during the degreening and dehydration stages of seed maturation) development in embryos and early stages of eoplast redifferentiation during seedling growth.</text>
</comment>
<comment type="subcellular location">
    <subcellularLocation>
        <location evidence="3">Plastid</location>
        <location evidence="3">Chloroplast membrane</location>
        <topology evidence="3">Peripheral membrane protein</topology>
        <orientation evidence="3">Intermembrane side</orientation>
    </subcellularLocation>
    <subcellularLocation>
        <location evidence="3">Plastid</location>
        <location evidence="3">Chloroplast envelope</location>
    </subcellularLocation>
</comment>
<comment type="alternative products">
    <event type="alternative splicing"/>
    <isoform>
        <id>F4J3R7-1</id>
        <name>1</name>
        <sequence type="displayed"/>
    </isoform>
    <isoform>
        <id>F4J3R7-2</id>
        <name evidence="8">2</name>
        <sequence type="described" ref="VSP_060460 VSP_060461"/>
    </isoform>
</comment>
<comment type="disruption phenotype">
    <text evidence="3">Albino seedlings with defects in etioplast and amyloplast development leading to degenerate organelle-like structures, but normal green vegetative tissues (PubMed:21045120). Reduced hypocotyl gravitropism probably due to the lack of amyloplasts (PubMed:21045120).</text>
</comment>
<comment type="similarity">
    <text evidence="5">Belongs to the ycf45 family.</text>
</comment>
<comment type="sequence caution" evidence="5">
    <conflict type="erroneous initiation">
        <sequence resource="EMBL-CDS" id="AAL06991"/>
    </conflict>
    <text>Truncated N-terminus.</text>
</comment>
<comment type="sequence caution" evidence="5">
    <conflict type="erroneous initiation">
        <sequence resource="EMBL-CDS" id="BAE98362"/>
    </conflict>
    <text>Truncated N-terminus.</text>
</comment>
<comment type="sequence caution" evidence="5">
    <conflict type="frameshift">
        <sequence resource="EMBL-CDS" id="BAE98362"/>
    </conflict>
</comment>